<protein>
    <recommendedName>
        <fullName evidence="1">Large ribosomal subunit protein uL6</fullName>
    </recommendedName>
    <alternativeName>
        <fullName evidence="2">50S ribosomal protein L6</fullName>
    </alternativeName>
</protein>
<reference key="1">
    <citation type="submission" date="2008-04" db="EMBL/GenBank/DDBJ databases">
        <title>Complete sequence of chromosome of Exiguobacterium sibiricum 255-15.</title>
        <authorList>
            <consortium name="US DOE Joint Genome Institute"/>
            <person name="Copeland A."/>
            <person name="Lucas S."/>
            <person name="Lapidus A."/>
            <person name="Glavina del Rio T."/>
            <person name="Dalin E."/>
            <person name="Tice H."/>
            <person name="Bruce D."/>
            <person name="Goodwin L."/>
            <person name="Pitluck S."/>
            <person name="Kiss H."/>
            <person name="Chertkov O."/>
            <person name="Monk C."/>
            <person name="Brettin T."/>
            <person name="Detter J.C."/>
            <person name="Han C."/>
            <person name="Kuske C.R."/>
            <person name="Schmutz J."/>
            <person name="Larimer F."/>
            <person name="Land M."/>
            <person name="Hauser L."/>
            <person name="Kyrpides N."/>
            <person name="Mikhailova N."/>
            <person name="Vishnivetskaya T."/>
            <person name="Rodrigues D.F."/>
            <person name="Gilichinsky D."/>
            <person name="Tiedje J."/>
            <person name="Richardson P."/>
        </authorList>
    </citation>
    <scope>NUCLEOTIDE SEQUENCE [LARGE SCALE GENOMIC DNA]</scope>
    <source>
        <strain>DSM 17290 / CCUG 55495 / CIP 109462 / JCM 13490 / 255-15</strain>
    </source>
</reference>
<dbReference type="EMBL" id="CP001022">
    <property type="protein sequence ID" value="ACB59598.1"/>
    <property type="molecule type" value="Genomic_DNA"/>
</dbReference>
<dbReference type="RefSeq" id="WP_012369024.1">
    <property type="nucleotide sequence ID" value="NC_010556.1"/>
</dbReference>
<dbReference type="SMR" id="B1YGW5"/>
<dbReference type="STRING" id="262543.Exig_0111"/>
<dbReference type="KEGG" id="esi:Exig_0111"/>
<dbReference type="eggNOG" id="COG0097">
    <property type="taxonomic scope" value="Bacteria"/>
</dbReference>
<dbReference type="HOGENOM" id="CLU_065464_1_2_9"/>
<dbReference type="OrthoDB" id="9805007at2"/>
<dbReference type="Proteomes" id="UP000001681">
    <property type="component" value="Chromosome"/>
</dbReference>
<dbReference type="GO" id="GO:0022625">
    <property type="term" value="C:cytosolic large ribosomal subunit"/>
    <property type="evidence" value="ECO:0007669"/>
    <property type="project" value="TreeGrafter"/>
</dbReference>
<dbReference type="GO" id="GO:0019843">
    <property type="term" value="F:rRNA binding"/>
    <property type="evidence" value="ECO:0007669"/>
    <property type="project" value="UniProtKB-UniRule"/>
</dbReference>
<dbReference type="GO" id="GO:0003735">
    <property type="term" value="F:structural constituent of ribosome"/>
    <property type="evidence" value="ECO:0007669"/>
    <property type="project" value="InterPro"/>
</dbReference>
<dbReference type="GO" id="GO:0002181">
    <property type="term" value="P:cytoplasmic translation"/>
    <property type="evidence" value="ECO:0007669"/>
    <property type="project" value="TreeGrafter"/>
</dbReference>
<dbReference type="FunFam" id="3.90.930.12:FF:000001">
    <property type="entry name" value="50S ribosomal protein L6"/>
    <property type="match status" value="1"/>
</dbReference>
<dbReference type="FunFam" id="3.90.930.12:FF:000002">
    <property type="entry name" value="50S ribosomal protein L6"/>
    <property type="match status" value="1"/>
</dbReference>
<dbReference type="Gene3D" id="3.90.930.12">
    <property type="entry name" value="Ribosomal protein L6, alpha-beta domain"/>
    <property type="match status" value="2"/>
</dbReference>
<dbReference type="HAMAP" id="MF_01365_B">
    <property type="entry name" value="Ribosomal_uL6_B"/>
    <property type="match status" value="1"/>
</dbReference>
<dbReference type="InterPro" id="IPR000702">
    <property type="entry name" value="Ribosomal_uL6-like"/>
</dbReference>
<dbReference type="InterPro" id="IPR036789">
    <property type="entry name" value="Ribosomal_uL6-like_a/b-dom_sf"/>
</dbReference>
<dbReference type="InterPro" id="IPR020040">
    <property type="entry name" value="Ribosomal_uL6_a/b-dom"/>
</dbReference>
<dbReference type="InterPro" id="IPR019906">
    <property type="entry name" value="Ribosomal_uL6_bac-type"/>
</dbReference>
<dbReference type="InterPro" id="IPR002358">
    <property type="entry name" value="Ribosomal_uL6_CS"/>
</dbReference>
<dbReference type="NCBIfam" id="TIGR03654">
    <property type="entry name" value="L6_bact"/>
    <property type="match status" value="1"/>
</dbReference>
<dbReference type="PANTHER" id="PTHR11655">
    <property type="entry name" value="60S/50S RIBOSOMAL PROTEIN L6/L9"/>
    <property type="match status" value="1"/>
</dbReference>
<dbReference type="PANTHER" id="PTHR11655:SF14">
    <property type="entry name" value="LARGE RIBOSOMAL SUBUNIT PROTEIN UL6M"/>
    <property type="match status" value="1"/>
</dbReference>
<dbReference type="Pfam" id="PF00347">
    <property type="entry name" value="Ribosomal_L6"/>
    <property type="match status" value="2"/>
</dbReference>
<dbReference type="PIRSF" id="PIRSF002162">
    <property type="entry name" value="Ribosomal_L6"/>
    <property type="match status" value="1"/>
</dbReference>
<dbReference type="PRINTS" id="PR00059">
    <property type="entry name" value="RIBOSOMALL6"/>
</dbReference>
<dbReference type="SUPFAM" id="SSF56053">
    <property type="entry name" value="Ribosomal protein L6"/>
    <property type="match status" value="2"/>
</dbReference>
<dbReference type="PROSITE" id="PS00525">
    <property type="entry name" value="RIBOSOMAL_L6_1"/>
    <property type="match status" value="1"/>
</dbReference>
<gene>
    <name evidence="1" type="primary">rplF</name>
    <name type="ordered locus">Exig_0111</name>
</gene>
<sequence length="178" mass="19535">MSRIGKKPVVIPAGVTVTVENSTVTVKGPKGELTREFNPTMAINVEGNELTVTRPNDEKANRTIHGTTRALIANMVEGVNNGFAKTLDIQGVGYRAQKQGNKIVLNLGYSHPIEYTPEQGIEVEVPTNTQIIVRGISKERVGHVAALIRSYRQPEPYKGKGIRYSDEVVRRKEGKTGK</sequence>
<evidence type="ECO:0000255" key="1">
    <source>
        <dbReference type="HAMAP-Rule" id="MF_01365"/>
    </source>
</evidence>
<evidence type="ECO:0000305" key="2"/>
<proteinExistence type="inferred from homology"/>
<name>RL6_EXIS2</name>
<feature type="chain" id="PRO_1000143991" description="Large ribosomal subunit protein uL6">
    <location>
        <begin position="1"/>
        <end position="178"/>
    </location>
</feature>
<keyword id="KW-1185">Reference proteome</keyword>
<keyword id="KW-0687">Ribonucleoprotein</keyword>
<keyword id="KW-0689">Ribosomal protein</keyword>
<keyword id="KW-0694">RNA-binding</keyword>
<keyword id="KW-0699">rRNA-binding</keyword>
<organism>
    <name type="scientific">Exiguobacterium sibiricum (strain DSM 17290 / CCUG 55495 / CIP 109462 / JCM 13490 / 255-15)</name>
    <dbReference type="NCBI Taxonomy" id="262543"/>
    <lineage>
        <taxon>Bacteria</taxon>
        <taxon>Bacillati</taxon>
        <taxon>Bacillota</taxon>
        <taxon>Bacilli</taxon>
        <taxon>Bacillales</taxon>
        <taxon>Bacillales Family XII. Incertae Sedis</taxon>
        <taxon>Exiguobacterium</taxon>
    </lineage>
</organism>
<comment type="function">
    <text evidence="1">This protein binds to the 23S rRNA, and is important in its secondary structure. It is located near the subunit interface in the base of the L7/L12 stalk, and near the tRNA binding site of the peptidyltransferase center.</text>
</comment>
<comment type="subunit">
    <text evidence="1">Part of the 50S ribosomal subunit.</text>
</comment>
<comment type="similarity">
    <text evidence="1">Belongs to the universal ribosomal protein uL6 family.</text>
</comment>
<accession>B1YGW5</accession>